<reference key="1">
    <citation type="journal article" date="2009" name="Genome Res.">
        <title>Comparative genomics of the fungal pathogens Candida dubliniensis and Candida albicans.</title>
        <authorList>
            <person name="Jackson A.P."/>
            <person name="Gamble J.A."/>
            <person name="Yeomans T."/>
            <person name="Moran G.P."/>
            <person name="Saunders D."/>
            <person name="Harris D."/>
            <person name="Aslett M."/>
            <person name="Barrell J.F."/>
            <person name="Butler G."/>
            <person name="Citiulo F."/>
            <person name="Coleman D.C."/>
            <person name="de Groot P.W.J."/>
            <person name="Goodwin T.J."/>
            <person name="Quail M.A."/>
            <person name="McQuillan J."/>
            <person name="Munro C.A."/>
            <person name="Pain A."/>
            <person name="Poulter R.T."/>
            <person name="Rajandream M.A."/>
            <person name="Renauld H."/>
            <person name="Spiering M.J."/>
            <person name="Tivey A."/>
            <person name="Gow N.A.R."/>
            <person name="Barrell B."/>
            <person name="Sullivan D.J."/>
            <person name="Berriman M."/>
        </authorList>
    </citation>
    <scope>NUCLEOTIDE SEQUENCE [LARGE SCALE GENOMIC DNA]</scope>
    <source>
        <strain>CD36 / ATCC MYA-646 / CBS 7987 / NCPF 3949 / NRRL Y-17841</strain>
    </source>
</reference>
<accession>B9W757</accession>
<evidence type="ECO:0000255" key="1">
    <source>
        <dbReference type="HAMAP-Rule" id="MF_03112"/>
    </source>
</evidence>
<proteinExistence type="inferred from homology"/>
<name>GET3_CANDC</name>
<dbReference type="EC" id="3.6.-.-" evidence="1"/>
<dbReference type="EMBL" id="FM992688">
    <property type="protein sequence ID" value="CAX44516.1"/>
    <property type="molecule type" value="Genomic_DNA"/>
</dbReference>
<dbReference type="RefSeq" id="XP_002416928.1">
    <property type="nucleotide sequence ID" value="XM_002416883.1"/>
</dbReference>
<dbReference type="SMR" id="B9W757"/>
<dbReference type="GeneID" id="8044464"/>
<dbReference type="KEGG" id="cdu:CD36_02560"/>
<dbReference type="CGD" id="CAL0000171085">
    <property type="gene designation" value="Cd36_02560"/>
</dbReference>
<dbReference type="VEuPathDB" id="FungiDB:CD36_02560"/>
<dbReference type="eggNOG" id="KOG2825">
    <property type="taxonomic scope" value="Eukaryota"/>
</dbReference>
<dbReference type="HOGENOM" id="CLU_040761_0_0_1"/>
<dbReference type="OrthoDB" id="1770at2759"/>
<dbReference type="Proteomes" id="UP000002605">
    <property type="component" value="Chromosome 1"/>
</dbReference>
<dbReference type="GO" id="GO:0043529">
    <property type="term" value="C:GET complex"/>
    <property type="evidence" value="ECO:0007669"/>
    <property type="project" value="TreeGrafter"/>
</dbReference>
<dbReference type="GO" id="GO:0005794">
    <property type="term" value="C:Golgi apparatus"/>
    <property type="evidence" value="ECO:0007669"/>
    <property type="project" value="UniProtKB-SubCell"/>
</dbReference>
<dbReference type="GO" id="GO:0005524">
    <property type="term" value="F:ATP binding"/>
    <property type="evidence" value="ECO:0007669"/>
    <property type="project" value="UniProtKB-UniRule"/>
</dbReference>
<dbReference type="GO" id="GO:0016887">
    <property type="term" value="F:ATP hydrolysis activity"/>
    <property type="evidence" value="ECO:0007669"/>
    <property type="project" value="InterPro"/>
</dbReference>
<dbReference type="GO" id="GO:0046872">
    <property type="term" value="F:metal ion binding"/>
    <property type="evidence" value="ECO:0007669"/>
    <property type="project" value="UniProtKB-KW"/>
</dbReference>
<dbReference type="GO" id="GO:0071816">
    <property type="term" value="P:tail-anchored membrane protein insertion into ER membrane"/>
    <property type="evidence" value="ECO:0007669"/>
    <property type="project" value="TreeGrafter"/>
</dbReference>
<dbReference type="CDD" id="cd02035">
    <property type="entry name" value="ArsA"/>
    <property type="match status" value="1"/>
</dbReference>
<dbReference type="FunFam" id="3.40.50.300:FF:001359">
    <property type="entry name" value="ATPase GET3"/>
    <property type="match status" value="1"/>
</dbReference>
<dbReference type="Gene3D" id="3.40.50.300">
    <property type="entry name" value="P-loop containing nucleotide triphosphate hydrolases"/>
    <property type="match status" value="1"/>
</dbReference>
<dbReference type="HAMAP" id="MF_03112">
    <property type="entry name" value="Asna1_Get3"/>
    <property type="match status" value="1"/>
</dbReference>
<dbReference type="InterPro" id="IPR025723">
    <property type="entry name" value="Anion-transp_ATPase-like_dom"/>
</dbReference>
<dbReference type="InterPro" id="IPR016300">
    <property type="entry name" value="ATPase_ArsA/GET3"/>
</dbReference>
<dbReference type="InterPro" id="IPR027542">
    <property type="entry name" value="ATPase_ArsA/GET3_euk"/>
</dbReference>
<dbReference type="InterPro" id="IPR027417">
    <property type="entry name" value="P-loop_NTPase"/>
</dbReference>
<dbReference type="NCBIfam" id="TIGR00345">
    <property type="entry name" value="GET3_arsA_TRC40"/>
    <property type="match status" value="1"/>
</dbReference>
<dbReference type="PANTHER" id="PTHR10803">
    <property type="entry name" value="ARSENICAL PUMP-DRIVING ATPASE ARSENITE-TRANSLOCATING ATPASE"/>
    <property type="match status" value="1"/>
</dbReference>
<dbReference type="PANTHER" id="PTHR10803:SF3">
    <property type="entry name" value="ATPASE GET3"/>
    <property type="match status" value="1"/>
</dbReference>
<dbReference type="Pfam" id="PF02374">
    <property type="entry name" value="ArsA_ATPase"/>
    <property type="match status" value="1"/>
</dbReference>
<dbReference type="SUPFAM" id="SSF52540">
    <property type="entry name" value="P-loop containing nucleoside triphosphate hydrolases"/>
    <property type="match status" value="1"/>
</dbReference>
<feature type="chain" id="PRO_0000388197" description="ATPase GET3">
    <location>
        <begin position="1"/>
        <end position="350"/>
    </location>
</feature>
<feature type="active site" evidence="1">
    <location>
        <position position="57"/>
    </location>
</feature>
<feature type="binding site" evidence="1">
    <location>
        <begin position="26"/>
        <end position="33"/>
    </location>
    <ligand>
        <name>ATP</name>
        <dbReference type="ChEBI" id="CHEBI:30616"/>
    </ligand>
</feature>
<feature type="binding site" evidence="1">
    <location>
        <position position="243"/>
    </location>
    <ligand>
        <name>ATP</name>
        <dbReference type="ChEBI" id="CHEBI:30616"/>
    </ligand>
</feature>
<feature type="binding site" evidence="1">
    <location>
        <position position="270"/>
    </location>
    <ligand>
        <name>ATP</name>
        <dbReference type="ChEBI" id="CHEBI:30616"/>
    </ligand>
</feature>
<feature type="binding site" evidence="1">
    <location>
        <position position="282"/>
    </location>
    <ligand>
        <name>Zn(2+)</name>
        <dbReference type="ChEBI" id="CHEBI:29105"/>
        <note>ligand shared between dimeric partners</note>
    </ligand>
</feature>
<feature type="binding site" evidence="1">
    <location>
        <position position="285"/>
    </location>
    <ligand>
        <name>Zn(2+)</name>
        <dbReference type="ChEBI" id="CHEBI:29105"/>
        <note>ligand shared between dimeric partners</note>
    </ligand>
</feature>
<keyword id="KW-0067">ATP-binding</keyword>
<keyword id="KW-0963">Cytoplasm</keyword>
<keyword id="KW-0256">Endoplasmic reticulum</keyword>
<keyword id="KW-0333">Golgi apparatus</keyword>
<keyword id="KW-0378">Hydrolase</keyword>
<keyword id="KW-0479">Metal-binding</keyword>
<keyword id="KW-0547">Nucleotide-binding</keyword>
<keyword id="KW-0813">Transport</keyword>
<keyword id="KW-0862">Zinc</keyword>
<protein>
    <recommendedName>
        <fullName evidence="1">ATPase GET3</fullName>
        <ecNumber evidence="1">3.6.-.-</ecNumber>
    </recommendedName>
    <alternativeName>
        <fullName evidence="1">Arsenical pump-driving ATPase</fullName>
    </alternativeName>
    <alternativeName>
        <fullName evidence="1">Arsenite-stimulated ATPase</fullName>
    </alternativeName>
    <alternativeName>
        <fullName evidence="1">Golgi to ER traffic protein 3</fullName>
    </alternativeName>
    <alternativeName>
        <fullName evidence="1">Guided entry of tail-anchored proteins 3</fullName>
    </alternativeName>
</protein>
<organism>
    <name type="scientific">Candida dubliniensis (strain CD36 / ATCC MYA-646 / CBS 7987 / NCPF 3949 / NRRL Y-17841)</name>
    <name type="common">Yeast</name>
    <dbReference type="NCBI Taxonomy" id="573826"/>
    <lineage>
        <taxon>Eukaryota</taxon>
        <taxon>Fungi</taxon>
        <taxon>Dikarya</taxon>
        <taxon>Ascomycota</taxon>
        <taxon>Saccharomycotina</taxon>
        <taxon>Pichiomycetes</taxon>
        <taxon>Debaryomycetaceae</taxon>
        <taxon>Candida/Lodderomyces clade</taxon>
        <taxon>Candida</taxon>
    </lineage>
</organism>
<gene>
    <name evidence="1" type="primary">GET3</name>
    <name type="ORF">CD36_02560</name>
</gene>
<sequence>MDFDLEPSLEELIKQDTLKWIFVGGKGGVGKTTTSSSIAVQLALQHPNDEFLLISTDPAHNLSDAFCQKFGKDARKVEGLSNLSCMEIDPEAAMSDLQQQAQQYNNDPNDPLKSIMNDMTGSIPGIDEALSFMEVLKHIKNQKVNESDDSTDKISYRTIIFDTAPTGHTLRFLQLPSTLQKLLGKFQQLSGKLGPMMSMLGGGGQGQQDMFAKLNEVQKNVEEVNEQFTNPDLTTFVCVCISEFLSLYETERMIQELMSYQMDVNSIVVNQLLFADDDENPCKRCVARWKMQKKYLDQMAELYEDYHLVKMPLLGSEIRGVENLKRFSKFLIKPYDPKVDRAIITEMKEQ</sequence>
<comment type="function">
    <text evidence="1">ATPase required for the post-translational delivery of tail-anchored (TA) proteins to the endoplasmic reticulum. Recognizes and selectively binds the transmembrane domain of TA proteins in the cytosol. This complex then targets to the endoplasmic reticulum by membrane-bound receptors GET1 and GET2, where the tail-anchored protein is released for insertion. This process is regulated by ATP binding and hydrolysis. ATP binding drives the homodimer towards the closed dimer state, facilitating recognition of newly synthesized TA membrane proteins. ATP hydrolysis is required for insertion. Subsequently, the homodimer reverts towards the open dimer state, lowering its affinity for the GET1-GET2 receptor, and returning it to the cytosol to initiate a new round of targeting. Cooperates with the HDEL receptor ERD2 to mediate the ATP-dependent retrieval of resident ER proteins that contain a C-terminal H-D-E-L retention signal from the Golgi to the ER. Involved in low-level resistance to the oxyanions arsenite and arsenate, and in heat tolerance.</text>
</comment>
<comment type="subunit">
    <text evidence="1">Homodimer. Component of the Golgi to ER traffic (GET) complex, which is composed of GET1, GET2 and GET3. Within the complex, GET1 and GET2 form a heterotetramer which is stabilized by phosphatidylinositol binding and which binds to the GET3 homodimer. Interacts with the chloride channel protein GEF1.</text>
</comment>
<comment type="subcellular location">
    <subcellularLocation>
        <location evidence="1">Cytoplasm</location>
    </subcellularLocation>
    <subcellularLocation>
        <location evidence="1">Endoplasmic reticulum</location>
    </subcellularLocation>
    <subcellularLocation>
        <location evidence="1">Golgi apparatus</location>
    </subcellularLocation>
    <text evidence="1">GET1 and GET2 are required for targeting GET3 to the endoplasmic reticulum.</text>
</comment>
<comment type="similarity">
    <text evidence="1">Belongs to the arsA ATPase family.</text>
</comment>